<evidence type="ECO:0000255" key="1">
    <source>
        <dbReference type="HAMAP-Rule" id="MF_01876"/>
    </source>
</evidence>
<keyword id="KW-0326">Glycosidase</keyword>
<keyword id="KW-0378">Hydrolase</keyword>
<keyword id="KW-0456">Lyase</keyword>
<keyword id="KW-0464">Manganese</keyword>
<keyword id="KW-0479">Metal-binding</keyword>
<accession>A5IMC0</accession>
<sequence length="284" mass="31620">MIIESRIEKGNPVVGMETTVFVHGLPRKEAIELFRRAKEISREKGFQLVVIGILKGKIIVGMSEEELETMMREGADKIGTREIPIAVAKGKNAATTVSATIFLSRRIGIEVVVTGGTGGVHPGRVDVSQDLTEMASSRTILVSSGIKSILDVEATFEMLETLEIPLVGFKTDEFPLFFSRKSGRRVPRVESVEEVLKIYETMREIGFEKTLMVLNPVPEEYEVPHDEIERLLEKIELEAEGKEVTPFLLKKLAEMTNGRTLKANLALLEENVKLAGEIAMKLKR</sequence>
<proteinExistence type="inferred from homology"/>
<reference key="1">
    <citation type="submission" date="2007-05" db="EMBL/GenBank/DDBJ databases">
        <title>Complete sequence of Thermotoga petrophila RKU-1.</title>
        <authorList>
            <consortium name="US DOE Joint Genome Institute"/>
            <person name="Copeland A."/>
            <person name="Lucas S."/>
            <person name="Lapidus A."/>
            <person name="Barry K."/>
            <person name="Glavina del Rio T."/>
            <person name="Dalin E."/>
            <person name="Tice H."/>
            <person name="Pitluck S."/>
            <person name="Sims D."/>
            <person name="Brettin T."/>
            <person name="Bruce D."/>
            <person name="Detter J.C."/>
            <person name="Han C."/>
            <person name="Tapia R."/>
            <person name="Schmutz J."/>
            <person name="Larimer F."/>
            <person name="Land M."/>
            <person name="Hauser L."/>
            <person name="Kyrpides N."/>
            <person name="Mikhailova N."/>
            <person name="Nelson K."/>
            <person name="Gogarten J.P."/>
            <person name="Noll K."/>
            <person name="Richardson P."/>
        </authorList>
    </citation>
    <scope>NUCLEOTIDE SEQUENCE [LARGE SCALE GENOMIC DNA]</scope>
    <source>
        <strain>ATCC BAA-488 / DSM 13995 / JCM 10881 / RKU-1</strain>
    </source>
</reference>
<feature type="chain" id="PRO_0000390557" description="Pseudouridine-5'-phosphate glycosidase">
    <location>
        <begin position="1"/>
        <end position="284"/>
    </location>
</feature>
<feature type="active site" description="Proton donor" evidence="1">
    <location>
        <position position="17"/>
    </location>
</feature>
<feature type="active site" description="Nucleophile" evidence="1">
    <location>
        <position position="147"/>
    </location>
</feature>
<feature type="binding site" evidence="1">
    <location>
        <position position="77"/>
    </location>
    <ligand>
        <name>substrate</name>
    </ligand>
</feature>
<feature type="binding site" evidence="1">
    <location>
        <position position="97"/>
    </location>
    <ligand>
        <name>substrate</name>
    </ligand>
</feature>
<feature type="binding site" evidence="1">
    <location>
        <position position="126"/>
    </location>
    <ligand>
        <name>Mn(2+)</name>
        <dbReference type="ChEBI" id="CHEBI:29035"/>
    </ligand>
</feature>
<feature type="binding site" evidence="1">
    <location>
        <begin position="128"/>
        <end position="130"/>
    </location>
    <ligand>
        <name>substrate</name>
    </ligand>
</feature>
<gene>
    <name evidence="1" type="primary">psuG</name>
    <name type="ordered locus">Tpet_1329</name>
</gene>
<name>PSUG_THEP1</name>
<dbReference type="EC" id="4.2.1.70" evidence="1"/>
<dbReference type="EMBL" id="CP000702">
    <property type="protein sequence ID" value="ABQ47343.1"/>
    <property type="molecule type" value="Genomic_DNA"/>
</dbReference>
<dbReference type="RefSeq" id="WP_011943811.1">
    <property type="nucleotide sequence ID" value="NC_009486.1"/>
</dbReference>
<dbReference type="SMR" id="A5IMC0"/>
<dbReference type="STRING" id="390874.Tpet_1329"/>
<dbReference type="KEGG" id="tpt:Tpet_1329"/>
<dbReference type="eggNOG" id="COG2313">
    <property type="taxonomic scope" value="Bacteria"/>
</dbReference>
<dbReference type="HOGENOM" id="CLU_012201_0_1_0"/>
<dbReference type="Proteomes" id="UP000006558">
    <property type="component" value="Chromosome"/>
</dbReference>
<dbReference type="GO" id="GO:0005737">
    <property type="term" value="C:cytoplasm"/>
    <property type="evidence" value="ECO:0007669"/>
    <property type="project" value="TreeGrafter"/>
</dbReference>
<dbReference type="GO" id="GO:0016798">
    <property type="term" value="F:hydrolase activity, acting on glycosyl bonds"/>
    <property type="evidence" value="ECO:0007669"/>
    <property type="project" value="UniProtKB-KW"/>
</dbReference>
<dbReference type="GO" id="GO:0046872">
    <property type="term" value="F:metal ion binding"/>
    <property type="evidence" value="ECO:0007669"/>
    <property type="project" value="UniProtKB-KW"/>
</dbReference>
<dbReference type="GO" id="GO:0004730">
    <property type="term" value="F:pseudouridylate synthase activity"/>
    <property type="evidence" value="ECO:0007669"/>
    <property type="project" value="UniProtKB-UniRule"/>
</dbReference>
<dbReference type="GO" id="GO:0046113">
    <property type="term" value="P:nucleobase catabolic process"/>
    <property type="evidence" value="ECO:0007669"/>
    <property type="project" value="UniProtKB-UniRule"/>
</dbReference>
<dbReference type="Gene3D" id="3.40.1790.10">
    <property type="entry name" value="Indigoidine synthase domain"/>
    <property type="match status" value="1"/>
</dbReference>
<dbReference type="HAMAP" id="MF_01876">
    <property type="entry name" value="PsiMP_glycosidase"/>
    <property type="match status" value="1"/>
</dbReference>
<dbReference type="InterPro" id="IPR022830">
    <property type="entry name" value="Indigdn_synthA-like"/>
</dbReference>
<dbReference type="InterPro" id="IPR007342">
    <property type="entry name" value="PsuG"/>
</dbReference>
<dbReference type="PANTHER" id="PTHR42909:SF1">
    <property type="entry name" value="CARBOHYDRATE KINASE PFKB DOMAIN-CONTAINING PROTEIN"/>
    <property type="match status" value="1"/>
</dbReference>
<dbReference type="PANTHER" id="PTHR42909">
    <property type="entry name" value="ZGC:136858"/>
    <property type="match status" value="1"/>
</dbReference>
<dbReference type="Pfam" id="PF04227">
    <property type="entry name" value="Indigoidine_A"/>
    <property type="match status" value="1"/>
</dbReference>
<dbReference type="SUPFAM" id="SSF110581">
    <property type="entry name" value="Indigoidine synthase A-like"/>
    <property type="match status" value="1"/>
</dbReference>
<organism>
    <name type="scientific">Thermotoga petrophila (strain ATCC BAA-488 / DSM 13995 / JCM 10881 / RKU-1)</name>
    <dbReference type="NCBI Taxonomy" id="390874"/>
    <lineage>
        <taxon>Bacteria</taxon>
        <taxon>Thermotogati</taxon>
        <taxon>Thermotogota</taxon>
        <taxon>Thermotogae</taxon>
        <taxon>Thermotogales</taxon>
        <taxon>Thermotogaceae</taxon>
        <taxon>Thermotoga</taxon>
    </lineage>
</organism>
<comment type="function">
    <text evidence="1">Catalyzes the reversible cleavage of pseudouridine 5'-phosphate (PsiMP) to ribose 5-phosphate and uracil. Functions biologically in the cleavage direction, as part of a pseudouridine degradation pathway.</text>
</comment>
<comment type="catalytic activity">
    <reaction evidence="1">
        <text>D-ribose 5-phosphate + uracil = psi-UMP + H2O</text>
        <dbReference type="Rhea" id="RHEA:18337"/>
        <dbReference type="ChEBI" id="CHEBI:15377"/>
        <dbReference type="ChEBI" id="CHEBI:17568"/>
        <dbReference type="ChEBI" id="CHEBI:58380"/>
        <dbReference type="ChEBI" id="CHEBI:78346"/>
        <dbReference type="EC" id="4.2.1.70"/>
    </reaction>
</comment>
<comment type="cofactor">
    <cofactor evidence="1">
        <name>Mn(2+)</name>
        <dbReference type="ChEBI" id="CHEBI:29035"/>
    </cofactor>
    <text evidence="1">Binds 1 Mn(2+) ion per subunit.</text>
</comment>
<comment type="subunit">
    <text evidence="1">Homotrimer.</text>
</comment>
<comment type="similarity">
    <text evidence="1">Belongs to the pseudouridine-5'-phosphate glycosidase family.</text>
</comment>
<protein>
    <recommendedName>
        <fullName evidence="1">Pseudouridine-5'-phosphate glycosidase</fullName>
        <shortName evidence="1">PsiMP glycosidase</shortName>
        <ecNumber evidence="1">4.2.1.70</ecNumber>
    </recommendedName>
</protein>